<sequence>MPDYLGADQRKTKEDEKDDKPIRALDEGDIALLKTYGQSTYSRQIKQVEDDIQQLLKKINELTGIKESDTGLAPPALWDLAADKQTLQSEQPLQVARCTKIINADSEDPKYIINVKQFAKFVVDLSDQVAPTDIEEGMRVGVDRNKYQIHIPLPPKIDPTVTMMQVEEKPDVTYSDVGGCKEQIEKLREVVETPLLHPERFVNLGIEPPKGVLLFGPPGTGKTLCARAVANRTDACFIRVIGSELVQKYVGEGARMVRELFEMARTKKACLIFFDEIDAIGGARFDDGAGGDNEVQRTMLELINQLDGFDPRGNIKVLMATNRPDTLDPALMRPGRLDRKIEFSLPDLEGRTHIFKIHARSMSVERDIRFELLARLCPNSTGAEIRSVCTEAGMFAIRARRKIATEKDFLEAVNKVIKSYAKFSATPRYMTYN</sequence>
<keyword id="KW-0007">Acetylation</keyword>
<keyword id="KW-0067">ATP-binding</keyword>
<keyword id="KW-0963">Cytoplasm</keyword>
<keyword id="KW-0547">Nucleotide-binding</keyword>
<keyword id="KW-0539">Nucleus</keyword>
<keyword id="KW-0597">Phosphoprotein</keyword>
<keyword id="KW-0647">Proteasome</keyword>
<keyword id="KW-1185">Reference proteome</keyword>
<keyword id="KW-0832">Ubl conjugation</keyword>
<protein>
    <recommendedName>
        <fullName>26S proteasome regulatory subunit 7</fullName>
    </recommendedName>
    <alternativeName>
        <fullName>26S proteasome AAA-ATPase subunit RPT1</fullName>
    </alternativeName>
    <alternativeName>
        <fullName>Proteasome 26S subunit ATPase 2</fullName>
    </alternativeName>
</protein>
<dbReference type="EMBL" id="BT020961">
    <property type="protein sequence ID" value="AAX08978.1"/>
    <property type="molecule type" value="mRNA"/>
</dbReference>
<dbReference type="EMBL" id="BC102391">
    <property type="protein sequence ID" value="AAI02392.2"/>
    <property type="molecule type" value="mRNA"/>
</dbReference>
<dbReference type="RefSeq" id="NP_001015639.1">
    <property type="nucleotide sequence ID" value="NM_001015639.1"/>
</dbReference>
<dbReference type="SMR" id="Q5E9F9"/>
<dbReference type="FunCoup" id="Q5E9F9">
    <property type="interactions" value="3850"/>
</dbReference>
<dbReference type="STRING" id="9913.ENSBTAP00000056372"/>
<dbReference type="PaxDb" id="9913-ENSBTAP00000056372"/>
<dbReference type="PeptideAtlas" id="Q5E9F9"/>
<dbReference type="Ensembl" id="ENSBTAT00000065774.3">
    <property type="protein sequence ID" value="ENSBTAP00000056372.1"/>
    <property type="gene ID" value="ENSBTAG00000046712.3"/>
</dbReference>
<dbReference type="GeneID" id="530186"/>
<dbReference type="KEGG" id="bta:530186"/>
<dbReference type="CTD" id="5701"/>
<dbReference type="VEuPathDB" id="HostDB:ENSBTAG00000046712"/>
<dbReference type="VGNC" id="VGNC:33455">
    <property type="gene designation" value="PSMC2"/>
</dbReference>
<dbReference type="eggNOG" id="KOG0729">
    <property type="taxonomic scope" value="Eukaryota"/>
</dbReference>
<dbReference type="GeneTree" id="ENSGT01020000230346"/>
<dbReference type="HOGENOM" id="CLU_000688_6_1_1"/>
<dbReference type="InParanoid" id="Q5E9F9"/>
<dbReference type="OMA" id="RSKYHIE"/>
<dbReference type="OrthoDB" id="1664597at2759"/>
<dbReference type="TreeFam" id="TF105661"/>
<dbReference type="Reactome" id="R-BTA-1169091">
    <property type="pathway name" value="Activation of NF-kappaB in B cells"/>
</dbReference>
<dbReference type="Reactome" id="R-BTA-1234176">
    <property type="pathway name" value="Oxygen-dependent proline hydroxylation of Hypoxia-inducible Factor Alpha"/>
</dbReference>
<dbReference type="Reactome" id="R-BTA-1236978">
    <property type="pathway name" value="Cross-presentation of soluble exogenous antigens (endosomes)"/>
</dbReference>
<dbReference type="Reactome" id="R-BTA-174084">
    <property type="pathway name" value="Autodegradation of Cdh1 by Cdh1:APC/C"/>
</dbReference>
<dbReference type="Reactome" id="R-BTA-174154">
    <property type="pathway name" value="APC/C:Cdc20 mediated degradation of Securin"/>
</dbReference>
<dbReference type="Reactome" id="R-BTA-174178">
    <property type="pathway name" value="APC/C:Cdh1 mediated degradation of Cdc20 and other APC/C:Cdh1 targeted proteins in late mitosis/early G1"/>
</dbReference>
<dbReference type="Reactome" id="R-BTA-174184">
    <property type="pathway name" value="Cdc20:Phospho-APC/C mediated degradation of Cyclin A"/>
</dbReference>
<dbReference type="Reactome" id="R-BTA-187577">
    <property type="pathway name" value="SCF(Skp2)-mediated degradation of p27/p21"/>
</dbReference>
<dbReference type="Reactome" id="R-BTA-195253">
    <property type="pathway name" value="Degradation of beta-catenin by the destruction complex"/>
</dbReference>
<dbReference type="Reactome" id="R-BTA-202424">
    <property type="pathway name" value="Downstream TCR signaling"/>
</dbReference>
<dbReference type="Reactome" id="R-BTA-2467813">
    <property type="pathway name" value="Separation of Sister Chromatids"/>
</dbReference>
<dbReference type="Reactome" id="R-BTA-2871837">
    <property type="pathway name" value="FCERI mediated NF-kB activation"/>
</dbReference>
<dbReference type="Reactome" id="R-BTA-349425">
    <property type="pathway name" value="Autodegradation of the E3 ubiquitin ligase COP1"/>
</dbReference>
<dbReference type="Reactome" id="R-BTA-350562">
    <property type="pathway name" value="Regulation of ornithine decarboxylase (ODC)"/>
</dbReference>
<dbReference type="Reactome" id="R-BTA-382556">
    <property type="pathway name" value="ABC-family proteins mediated transport"/>
</dbReference>
<dbReference type="Reactome" id="R-BTA-450408">
    <property type="pathway name" value="AUF1 (hnRNP D0) binds and destabilizes mRNA"/>
</dbReference>
<dbReference type="Reactome" id="R-BTA-4608870">
    <property type="pathway name" value="Asymmetric localization of PCP proteins"/>
</dbReference>
<dbReference type="Reactome" id="R-BTA-4641257">
    <property type="pathway name" value="Degradation of AXIN"/>
</dbReference>
<dbReference type="Reactome" id="R-BTA-4641258">
    <property type="pathway name" value="Degradation of DVL"/>
</dbReference>
<dbReference type="Reactome" id="R-BTA-5358346">
    <property type="pathway name" value="Hedgehog ligand biogenesis"/>
</dbReference>
<dbReference type="Reactome" id="R-BTA-5607761">
    <property type="pathway name" value="Dectin-1 mediated noncanonical NF-kB signaling"/>
</dbReference>
<dbReference type="Reactome" id="R-BTA-5607764">
    <property type="pathway name" value="CLEC7A (Dectin-1) signaling"/>
</dbReference>
<dbReference type="Reactome" id="R-BTA-5610780">
    <property type="pathway name" value="Degradation of GLI1 by the proteasome"/>
</dbReference>
<dbReference type="Reactome" id="R-BTA-5610785">
    <property type="pathway name" value="GLI3 is processed to GLI3R by the proteasome"/>
</dbReference>
<dbReference type="Reactome" id="R-BTA-5632684">
    <property type="pathway name" value="Hedgehog 'on' state"/>
</dbReference>
<dbReference type="Reactome" id="R-BTA-5668541">
    <property type="pathway name" value="TNFR2 non-canonical NF-kB pathway"/>
</dbReference>
<dbReference type="Reactome" id="R-BTA-5676590">
    <property type="pathway name" value="NIK--&gt;noncanonical NF-kB signaling"/>
</dbReference>
<dbReference type="Reactome" id="R-BTA-5687128">
    <property type="pathway name" value="MAPK6/MAPK4 signaling"/>
</dbReference>
<dbReference type="Reactome" id="R-BTA-5689603">
    <property type="pathway name" value="UCH proteinases"/>
</dbReference>
<dbReference type="Reactome" id="R-BTA-5689880">
    <property type="pathway name" value="Ub-specific processing proteases"/>
</dbReference>
<dbReference type="Reactome" id="R-BTA-6798695">
    <property type="pathway name" value="Neutrophil degranulation"/>
</dbReference>
<dbReference type="Reactome" id="R-BTA-68867">
    <property type="pathway name" value="Assembly of the pre-replicative complex"/>
</dbReference>
<dbReference type="Reactome" id="R-BTA-68949">
    <property type="pathway name" value="Orc1 removal from chromatin"/>
</dbReference>
<dbReference type="Reactome" id="R-BTA-69017">
    <property type="pathway name" value="CDK-mediated phosphorylation and removal of Cdc6"/>
</dbReference>
<dbReference type="Reactome" id="R-BTA-69481">
    <property type="pathway name" value="G2/M Checkpoints"/>
</dbReference>
<dbReference type="Reactome" id="R-BTA-69601">
    <property type="pathway name" value="Ubiquitin Mediated Degradation of Phosphorylated Cdc25A"/>
</dbReference>
<dbReference type="Reactome" id="R-BTA-75815">
    <property type="pathway name" value="Ubiquitin-dependent degradation of Cyclin D"/>
</dbReference>
<dbReference type="Reactome" id="R-BTA-8852276">
    <property type="pathway name" value="The role of GTSE1 in G2/M progression after G2 checkpoint"/>
</dbReference>
<dbReference type="Reactome" id="R-BTA-8854050">
    <property type="pathway name" value="FBXL7 down-regulates AURKA during mitotic entry and in early mitosis"/>
</dbReference>
<dbReference type="Reactome" id="R-BTA-8939236">
    <property type="pathway name" value="RUNX1 regulates transcription of genes involved in differentiation of HSCs"/>
</dbReference>
<dbReference type="Reactome" id="R-BTA-8939902">
    <property type="pathway name" value="Regulation of RUNX2 expression and activity"/>
</dbReference>
<dbReference type="Reactome" id="R-BTA-8941858">
    <property type="pathway name" value="Regulation of RUNX3 expression and activity"/>
</dbReference>
<dbReference type="Reactome" id="R-BTA-8948751">
    <property type="pathway name" value="Regulation of PTEN stability and activity"/>
</dbReference>
<dbReference type="Reactome" id="R-BTA-8951664">
    <property type="pathway name" value="Neddylation"/>
</dbReference>
<dbReference type="Reactome" id="R-BTA-9020702">
    <property type="pathway name" value="Interleukin-1 signaling"/>
</dbReference>
<dbReference type="Reactome" id="R-BTA-9755511">
    <property type="pathway name" value="KEAP1-NFE2L2 pathway"/>
</dbReference>
<dbReference type="Reactome" id="R-BTA-9762114">
    <property type="pathway name" value="GSK3B and BTRC:CUL1-mediated-degradation of NFE2L2"/>
</dbReference>
<dbReference type="Reactome" id="R-BTA-983168">
    <property type="pathway name" value="Antigen processing: Ubiquitination &amp; Proteasome degradation"/>
</dbReference>
<dbReference type="Reactome" id="R-BTA-9907900">
    <property type="pathway name" value="Proteasome assembly"/>
</dbReference>
<dbReference type="Proteomes" id="UP000009136">
    <property type="component" value="Chromosome 4"/>
</dbReference>
<dbReference type="Bgee" id="ENSBTAG00000046712">
    <property type="expression patterns" value="Expressed in semen and 103 other cell types or tissues"/>
</dbReference>
<dbReference type="GO" id="GO:0005829">
    <property type="term" value="C:cytosol"/>
    <property type="evidence" value="ECO:0000304"/>
    <property type="project" value="Reactome"/>
</dbReference>
<dbReference type="GO" id="GO:0005634">
    <property type="term" value="C:nucleus"/>
    <property type="evidence" value="ECO:0007669"/>
    <property type="project" value="UniProtKB-SubCell"/>
</dbReference>
<dbReference type="GO" id="GO:0000932">
    <property type="term" value="C:P-body"/>
    <property type="evidence" value="ECO:0000250"/>
    <property type="project" value="UniProtKB"/>
</dbReference>
<dbReference type="GO" id="GO:0022624">
    <property type="term" value="C:proteasome accessory complex"/>
    <property type="evidence" value="ECO:0000250"/>
    <property type="project" value="UniProtKB"/>
</dbReference>
<dbReference type="GO" id="GO:0000502">
    <property type="term" value="C:proteasome complex"/>
    <property type="evidence" value="ECO:0000250"/>
    <property type="project" value="UniProtKB"/>
</dbReference>
<dbReference type="GO" id="GO:0008540">
    <property type="term" value="C:proteasome regulatory particle, base subcomplex"/>
    <property type="evidence" value="ECO:0000318"/>
    <property type="project" value="GO_Central"/>
</dbReference>
<dbReference type="GO" id="GO:0005524">
    <property type="term" value="F:ATP binding"/>
    <property type="evidence" value="ECO:0007669"/>
    <property type="project" value="UniProtKB-KW"/>
</dbReference>
<dbReference type="GO" id="GO:0016887">
    <property type="term" value="F:ATP hydrolysis activity"/>
    <property type="evidence" value="ECO:0007669"/>
    <property type="project" value="InterPro"/>
</dbReference>
<dbReference type="GO" id="GO:0036402">
    <property type="term" value="F:proteasome-activating activity"/>
    <property type="evidence" value="ECO:0000250"/>
    <property type="project" value="UniProtKB"/>
</dbReference>
<dbReference type="GO" id="GO:0043161">
    <property type="term" value="P:proteasome-mediated ubiquitin-dependent protein catabolic process"/>
    <property type="evidence" value="ECO:0000318"/>
    <property type="project" value="GO_Central"/>
</dbReference>
<dbReference type="GO" id="GO:0006511">
    <property type="term" value="P:ubiquitin-dependent protein catabolic process"/>
    <property type="evidence" value="ECO:0000250"/>
    <property type="project" value="UniProtKB"/>
</dbReference>
<dbReference type="CDD" id="cd19502">
    <property type="entry name" value="RecA-like_PAN_like"/>
    <property type="match status" value="1"/>
</dbReference>
<dbReference type="FunFam" id="1.10.8.60:FF:000005">
    <property type="entry name" value="26S protease regulatory subunit 7"/>
    <property type="match status" value="1"/>
</dbReference>
<dbReference type="FunFam" id="2.40.50.140:FF:000075">
    <property type="entry name" value="26S protease regulatory subunit 7"/>
    <property type="match status" value="1"/>
</dbReference>
<dbReference type="FunFam" id="3.40.50.300:FF:000027">
    <property type="entry name" value="26S protease regulatory subunit 7"/>
    <property type="match status" value="1"/>
</dbReference>
<dbReference type="Gene3D" id="1.10.8.60">
    <property type="match status" value="1"/>
</dbReference>
<dbReference type="Gene3D" id="2.40.50.140">
    <property type="entry name" value="Nucleic acid-binding proteins"/>
    <property type="match status" value="1"/>
</dbReference>
<dbReference type="Gene3D" id="3.40.50.300">
    <property type="entry name" value="P-loop containing nucleotide triphosphate hydrolases"/>
    <property type="match status" value="1"/>
</dbReference>
<dbReference type="InterPro" id="IPR050221">
    <property type="entry name" value="26S_Proteasome_ATPase"/>
</dbReference>
<dbReference type="InterPro" id="IPR003593">
    <property type="entry name" value="AAA+_ATPase"/>
</dbReference>
<dbReference type="InterPro" id="IPR041569">
    <property type="entry name" value="AAA_lid_3"/>
</dbReference>
<dbReference type="InterPro" id="IPR003959">
    <property type="entry name" value="ATPase_AAA_core"/>
</dbReference>
<dbReference type="InterPro" id="IPR003960">
    <property type="entry name" value="ATPase_AAA_CS"/>
</dbReference>
<dbReference type="InterPro" id="IPR012340">
    <property type="entry name" value="NA-bd_OB-fold"/>
</dbReference>
<dbReference type="InterPro" id="IPR027417">
    <property type="entry name" value="P-loop_NTPase"/>
</dbReference>
<dbReference type="InterPro" id="IPR048723">
    <property type="entry name" value="PRS7-like_OB"/>
</dbReference>
<dbReference type="PANTHER" id="PTHR23073">
    <property type="entry name" value="26S PROTEASOME REGULATORY SUBUNIT"/>
    <property type="match status" value="1"/>
</dbReference>
<dbReference type="Pfam" id="PF00004">
    <property type="entry name" value="AAA"/>
    <property type="match status" value="1"/>
</dbReference>
<dbReference type="Pfam" id="PF17862">
    <property type="entry name" value="AAA_lid_3"/>
    <property type="match status" value="1"/>
</dbReference>
<dbReference type="Pfam" id="PF21236">
    <property type="entry name" value="PRS7_OB"/>
    <property type="match status" value="1"/>
</dbReference>
<dbReference type="SMART" id="SM00382">
    <property type="entry name" value="AAA"/>
    <property type="match status" value="1"/>
</dbReference>
<dbReference type="SUPFAM" id="SSF52540">
    <property type="entry name" value="P-loop containing nucleoside triphosphate hydrolases"/>
    <property type="match status" value="1"/>
</dbReference>
<dbReference type="PROSITE" id="PS00674">
    <property type="entry name" value="AAA"/>
    <property type="match status" value="1"/>
</dbReference>
<proteinExistence type="evidence at transcript level"/>
<feature type="chain" id="PRO_0000249766" description="26S proteasome regulatory subunit 7">
    <location>
        <begin position="1"/>
        <end position="433"/>
    </location>
</feature>
<feature type="region of interest" description="Disordered" evidence="3">
    <location>
        <begin position="1"/>
        <end position="22"/>
    </location>
</feature>
<feature type="compositionally biased region" description="Basic and acidic residues" evidence="3">
    <location>
        <begin position="8"/>
        <end position="22"/>
    </location>
</feature>
<feature type="binding site" evidence="2">
    <location>
        <begin position="216"/>
        <end position="223"/>
    </location>
    <ligand>
        <name>ATP</name>
        <dbReference type="ChEBI" id="CHEBI:30616"/>
    </ligand>
</feature>
<feature type="modified residue" description="N6-acetyllysine" evidence="1">
    <location>
        <position position="116"/>
    </location>
</feature>
<feature type="modified residue" description="N6-acetyllysine" evidence="1">
    <location>
        <position position="422"/>
    </location>
</feature>
<comment type="function">
    <text evidence="1">Component of the 26S proteasome, a multiprotein complex involved in the ATP-dependent degradation of ubiquitinated proteins. This complex plays a key role in the maintenance of protein homeostasis by removing misfolded or damaged proteins, which could impair cellular functions, and by removing proteins whose functions are no longer required. Therefore, the proteasome participates in numerous cellular processes, including cell cycle progression, apoptosis, or DNA damage repair. PSMC2 belongs to the heterohexameric ring of AAA (ATPases associated with diverse cellular activities) proteins that unfolds ubiquitinated target proteins that are concurrently translocated into a proteolytic chamber and degraded into peptides.</text>
</comment>
<comment type="subunit">
    <text evidence="1">Component of the 19S proteasome regulatory particle complex. The 26S proteasome consists of a 20S core particle (CP) and two 19S regulatory subunits (RP). The regulatory particle is made of a lid composed of 9 subunits, a base containing 6 ATPases including PSMC2 and few additional components. Interacts with NDC80/HEC; this interaction is detected only during M phase. Interacts and SQSTM1. Interacts with PAAF1. Directly interacts with TRIM5.</text>
</comment>
<comment type="subcellular location">
    <subcellularLocation>
        <location evidence="1">Cytoplasm</location>
    </subcellularLocation>
    <subcellularLocation>
        <location evidence="1">Nucleus</location>
    </subcellularLocation>
    <text evidence="1">Colocalizes with TRIM5 in cytoplasmic bodies.</text>
</comment>
<comment type="PTM">
    <text evidence="1">Monoubiquitinated by RNF181.</text>
</comment>
<comment type="PTM">
    <text evidence="1">Phosphorylated. Dephosphorylated by UBLCP1 which impairs PSMC2 ATPase activity and disrupts 26S proteasome assembly.</text>
</comment>
<comment type="similarity">
    <text evidence="4">Belongs to the AAA ATPase family.</text>
</comment>
<gene>
    <name type="primary">PSMC2</name>
</gene>
<organism>
    <name type="scientific">Bos taurus</name>
    <name type="common">Bovine</name>
    <dbReference type="NCBI Taxonomy" id="9913"/>
    <lineage>
        <taxon>Eukaryota</taxon>
        <taxon>Metazoa</taxon>
        <taxon>Chordata</taxon>
        <taxon>Craniata</taxon>
        <taxon>Vertebrata</taxon>
        <taxon>Euteleostomi</taxon>
        <taxon>Mammalia</taxon>
        <taxon>Eutheria</taxon>
        <taxon>Laurasiatheria</taxon>
        <taxon>Artiodactyla</taxon>
        <taxon>Ruminantia</taxon>
        <taxon>Pecora</taxon>
        <taxon>Bovidae</taxon>
        <taxon>Bovinae</taxon>
        <taxon>Bos</taxon>
    </lineage>
</organism>
<name>PRS7_BOVIN</name>
<reference key="1">
    <citation type="journal article" date="2005" name="BMC Genomics">
        <title>Characterization of 954 bovine full-CDS cDNA sequences.</title>
        <authorList>
            <person name="Harhay G.P."/>
            <person name="Sonstegard T.S."/>
            <person name="Keele J.W."/>
            <person name="Heaton M.P."/>
            <person name="Clawson M.L."/>
            <person name="Snelling W.M."/>
            <person name="Wiedmann R.T."/>
            <person name="Van Tassell C.P."/>
            <person name="Smith T.P.L."/>
        </authorList>
    </citation>
    <scope>NUCLEOTIDE SEQUENCE [LARGE SCALE MRNA]</scope>
</reference>
<reference key="2">
    <citation type="submission" date="2005-08" db="EMBL/GenBank/DDBJ databases">
        <authorList>
            <consortium name="NIH - Mammalian Gene Collection (MGC) project"/>
        </authorList>
    </citation>
    <scope>NUCLEOTIDE SEQUENCE [LARGE SCALE MRNA]</scope>
    <source>
        <strain>Crossbred X Angus</strain>
        <tissue>Ileum</tissue>
    </source>
</reference>
<evidence type="ECO:0000250" key="1">
    <source>
        <dbReference type="UniProtKB" id="P35998"/>
    </source>
</evidence>
<evidence type="ECO:0000255" key="2"/>
<evidence type="ECO:0000256" key="3">
    <source>
        <dbReference type="SAM" id="MobiDB-lite"/>
    </source>
</evidence>
<evidence type="ECO:0000305" key="4"/>
<accession>Q5E9F9</accession>
<accession>Q3T0H8</accession>